<dbReference type="EC" id="2.8.1.-" evidence="1"/>
<dbReference type="EMBL" id="AL590842">
    <property type="protein sequence ID" value="CAL18881.1"/>
    <property type="molecule type" value="Genomic_DNA"/>
</dbReference>
<dbReference type="EMBL" id="AE009952">
    <property type="protein sequence ID" value="AAM87523.1"/>
    <property type="molecule type" value="Genomic_DNA"/>
</dbReference>
<dbReference type="EMBL" id="AE017042">
    <property type="protein sequence ID" value="AAS60472.1"/>
    <property type="molecule type" value="Genomic_DNA"/>
</dbReference>
<dbReference type="PIR" id="AH0024">
    <property type="entry name" value="AH0024"/>
</dbReference>
<dbReference type="RefSeq" id="WP_002212320.1">
    <property type="nucleotide sequence ID" value="NZ_WUCM01000004.1"/>
</dbReference>
<dbReference type="RefSeq" id="YP_002345279.1">
    <property type="nucleotide sequence ID" value="NC_003143.1"/>
</dbReference>
<dbReference type="SMR" id="Q8ZJB8"/>
<dbReference type="STRING" id="214092.YPO0197"/>
<dbReference type="PaxDb" id="214092-YPO0197"/>
<dbReference type="DNASU" id="1148926"/>
<dbReference type="EnsemblBacteria" id="AAS60472">
    <property type="protein sequence ID" value="AAS60472"/>
    <property type="gene ID" value="YP_0196"/>
</dbReference>
<dbReference type="GeneID" id="57974406"/>
<dbReference type="KEGG" id="ype:YPO0197"/>
<dbReference type="KEGG" id="ypk:y3979"/>
<dbReference type="KEGG" id="ypm:YP_0196"/>
<dbReference type="PATRIC" id="fig|214092.21.peg.429"/>
<dbReference type="eggNOG" id="COG1553">
    <property type="taxonomic scope" value="Bacteria"/>
</dbReference>
<dbReference type="HOGENOM" id="CLU_132095_0_0_6"/>
<dbReference type="OMA" id="PYNHQAS"/>
<dbReference type="OrthoDB" id="9787483at2"/>
<dbReference type="Proteomes" id="UP000000815">
    <property type="component" value="Chromosome"/>
</dbReference>
<dbReference type="Proteomes" id="UP000001019">
    <property type="component" value="Chromosome"/>
</dbReference>
<dbReference type="Proteomes" id="UP000002490">
    <property type="component" value="Chromosome"/>
</dbReference>
<dbReference type="GO" id="GO:0005829">
    <property type="term" value="C:cytosol"/>
    <property type="evidence" value="ECO:0000318"/>
    <property type="project" value="GO_Central"/>
</dbReference>
<dbReference type="GO" id="GO:1990228">
    <property type="term" value="C:sulfurtransferase complex"/>
    <property type="evidence" value="ECO:0000318"/>
    <property type="project" value="GO_Central"/>
</dbReference>
<dbReference type="GO" id="GO:0097163">
    <property type="term" value="F:sulfur carrier activity"/>
    <property type="evidence" value="ECO:0000318"/>
    <property type="project" value="GO_Central"/>
</dbReference>
<dbReference type="GO" id="GO:0016783">
    <property type="term" value="F:sulfurtransferase activity"/>
    <property type="evidence" value="ECO:0007669"/>
    <property type="project" value="UniProtKB-UniRule"/>
</dbReference>
<dbReference type="GO" id="GO:0002143">
    <property type="term" value="P:tRNA wobble position uridine thiolation"/>
    <property type="evidence" value="ECO:0000318"/>
    <property type="project" value="GO_Central"/>
</dbReference>
<dbReference type="FunFam" id="3.40.1260.10:FF:000001">
    <property type="entry name" value="Sulfurtransferase TusD"/>
    <property type="match status" value="1"/>
</dbReference>
<dbReference type="Gene3D" id="3.40.1260.10">
    <property type="entry name" value="DsrEFH-like"/>
    <property type="match status" value="1"/>
</dbReference>
<dbReference type="HAMAP" id="MF_00390">
    <property type="entry name" value="Thiourid_synth_D"/>
    <property type="match status" value="1"/>
</dbReference>
<dbReference type="InterPro" id="IPR027396">
    <property type="entry name" value="DsrEFH-like"/>
</dbReference>
<dbReference type="InterPro" id="IPR003787">
    <property type="entry name" value="Sulphur_relay_DsrE/F-like"/>
</dbReference>
<dbReference type="InterPro" id="IPR017463">
    <property type="entry name" value="Sulphur_relay_TusD/DsrE"/>
</dbReference>
<dbReference type="NCBIfam" id="NF001237">
    <property type="entry name" value="PRK00207.1"/>
    <property type="match status" value="1"/>
</dbReference>
<dbReference type="NCBIfam" id="TIGR03012">
    <property type="entry name" value="sulf_tusD_dsrE"/>
    <property type="match status" value="1"/>
</dbReference>
<dbReference type="PANTHER" id="PTHR34874">
    <property type="entry name" value="PROTEIN YCHN"/>
    <property type="match status" value="1"/>
</dbReference>
<dbReference type="PANTHER" id="PTHR34874:SF3">
    <property type="entry name" value="SULFURTRANSFERASE TUSD"/>
    <property type="match status" value="1"/>
</dbReference>
<dbReference type="Pfam" id="PF02635">
    <property type="entry name" value="DsrE"/>
    <property type="match status" value="1"/>
</dbReference>
<dbReference type="SUPFAM" id="SSF75169">
    <property type="entry name" value="DsrEFH-like"/>
    <property type="match status" value="1"/>
</dbReference>
<name>TUSD_YERPE</name>
<reference key="1">
    <citation type="journal article" date="2001" name="Nature">
        <title>Genome sequence of Yersinia pestis, the causative agent of plague.</title>
        <authorList>
            <person name="Parkhill J."/>
            <person name="Wren B.W."/>
            <person name="Thomson N.R."/>
            <person name="Titball R.W."/>
            <person name="Holden M.T.G."/>
            <person name="Prentice M.B."/>
            <person name="Sebaihia M."/>
            <person name="James K.D."/>
            <person name="Churcher C.M."/>
            <person name="Mungall K.L."/>
            <person name="Baker S."/>
            <person name="Basham D."/>
            <person name="Bentley S.D."/>
            <person name="Brooks K."/>
            <person name="Cerdeno-Tarraga A.-M."/>
            <person name="Chillingworth T."/>
            <person name="Cronin A."/>
            <person name="Davies R.M."/>
            <person name="Davis P."/>
            <person name="Dougan G."/>
            <person name="Feltwell T."/>
            <person name="Hamlin N."/>
            <person name="Holroyd S."/>
            <person name="Jagels K."/>
            <person name="Karlyshev A.V."/>
            <person name="Leather S."/>
            <person name="Moule S."/>
            <person name="Oyston P.C.F."/>
            <person name="Quail M.A."/>
            <person name="Rutherford K.M."/>
            <person name="Simmonds M."/>
            <person name="Skelton J."/>
            <person name="Stevens K."/>
            <person name="Whitehead S."/>
            <person name="Barrell B.G."/>
        </authorList>
    </citation>
    <scope>NUCLEOTIDE SEQUENCE [LARGE SCALE GENOMIC DNA]</scope>
    <source>
        <strain>CO-92 / Biovar Orientalis</strain>
    </source>
</reference>
<reference key="2">
    <citation type="journal article" date="2002" name="J. Bacteriol.">
        <title>Genome sequence of Yersinia pestis KIM.</title>
        <authorList>
            <person name="Deng W."/>
            <person name="Burland V."/>
            <person name="Plunkett G. III"/>
            <person name="Boutin A."/>
            <person name="Mayhew G.F."/>
            <person name="Liss P."/>
            <person name="Perna N.T."/>
            <person name="Rose D.J."/>
            <person name="Mau B."/>
            <person name="Zhou S."/>
            <person name="Schwartz D.C."/>
            <person name="Fetherston J.D."/>
            <person name="Lindler L.E."/>
            <person name="Brubaker R.R."/>
            <person name="Plano G.V."/>
            <person name="Straley S.C."/>
            <person name="McDonough K.A."/>
            <person name="Nilles M.L."/>
            <person name="Matson J.S."/>
            <person name="Blattner F.R."/>
            <person name="Perry R.D."/>
        </authorList>
    </citation>
    <scope>NUCLEOTIDE SEQUENCE [LARGE SCALE GENOMIC DNA]</scope>
    <source>
        <strain>KIM10+ / Biovar Mediaevalis</strain>
    </source>
</reference>
<reference key="3">
    <citation type="journal article" date="2004" name="DNA Res.">
        <title>Complete genome sequence of Yersinia pestis strain 91001, an isolate avirulent to humans.</title>
        <authorList>
            <person name="Song Y."/>
            <person name="Tong Z."/>
            <person name="Wang J."/>
            <person name="Wang L."/>
            <person name="Guo Z."/>
            <person name="Han Y."/>
            <person name="Zhang J."/>
            <person name="Pei D."/>
            <person name="Zhou D."/>
            <person name="Qin H."/>
            <person name="Pang X."/>
            <person name="Han Y."/>
            <person name="Zhai J."/>
            <person name="Li M."/>
            <person name="Cui B."/>
            <person name="Qi Z."/>
            <person name="Jin L."/>
            <person name="Dai R."/>
            <person name="Chen F."/>
            <person name="Li S."/>
            <person name="Ye C."/>
            <person name="Du Z."/>
            <person name="Lin W."/>
            <person name="Wang J."/>
            <person name="Yu J."/>
            <person name="Yang H."/>
            <person name="Wang J."/>
            <person name="Huang P."/>
            <person name="Yang R."/>
        </authorList>
    </citation>
    <scope>NUCLEOTIDE SEQUENCE [LARGE SCALE GENOMIC DNA]</scope>
    <source>
        <strain>91001 / Biovar Mediaevalis</strain>
    </source>
</reference>
<comment type="function">
    <text evidence="1">Part of a sulfur-relay system required for 2-thiolation of 5-methylaminomethyl-2-thiouridine (mnm(5)s(2)U) at tRNA wobble positions. Accepts sulfur from TusA and transfers it in turn to TusE.</text>
</comment>
<comment type="subunit">
    <text evidence="1">Heterohexamer, formed by a dimer of trimers. The hexameric TusBCD complex contains 2 copies each of TusB, TusC and TusD. The TusBCD complex interacts with TusE.</text>
</comment>
<comment type="subcellular location">
    <subcellularLocation>
        <location evidence="1">Cytoplasm</location>
    </subcellularLocation>
</comment>
<comment type="similarity">
    <text evidence="1">Belongs to the DsrE/TusD family.</text>
</comment>
<proteinExistence type="inferred from homology"/>
<sequence length="131" mass="13959">MSALKYCLLVTGPAYGTQQASSAYQFAQAVVGAGHHLVSIFFYREGVLNANQLTAPASDEFDLVRAWQQLAAEQAVTLNVCVAAALRRGITDQHEAEQLNLAAANLQPGFTLSGLGALAEATLTCDRMVQF</sequence>
<evidence type="ECO:0000255" key="1">
    <source>
        <dbReference type="HAMAP-Rule" id="MF_00390"/>
    </source>
</evidence>
<gene>
    <name evidence="1" type="primary">tusD</name>
    <name type="ordered locus">YPO0197</name>
    <name type="ordered locus">y3979</name>
    <name type="ordered locus">YP_0196</name>
</gene>
<keyword id="KW-0963">Cytoplasm</keyword>
<keyword id="KW-1185">Reference proteome</keyword>
<keyword id="KW-0808">Transferase</keyword>
<keyword id="KW-0819">tRNA processing</keyword>
<protein>
    <recommendedName>
        <fullName evidence="1">Sulfurtransferase TusD</fullName>
        <ecNumber evidence="1">2.8.1.-</ecNumber>
    </recommendedName>
    <alternativeName>
        <fullName evidence="1">tRNA 2-thiouridine synthesizing protein D</fullName>
    </alternativeName>
</protein>
<accession>Q8ZJB8</accession>
<accession>Q0WKA9</accession>
<feature type="chain" id="PRO_0000214741" description="Sulfurtransferase TusD">
    <location>
        <begin position="1"/>
        <end position="131"/>
    </location>
</feature>
<feature type="active site" description="Cysteine persulfide intermediate" evidence="1">
    <location>
        <position position="81"/>
    </location>
</feature>
<organism>
    <name type="scientific">Yersinia pestis</name>
    <dbReference type="NCBI Taxonomy" id="632"/>
    <lineage>
        <taxon>Bacteria</taxon>
        <taxon>Pseudomonadati</taxon>
        <taxon>Pseudomonadota</taxon>
        <taxon>Gammaproteobacteria</taxon>
        <taxon>Enterobacterales</taxon>
        <taxon>Yersiniaceae</taxon>
        <taxon>Yersinia</taxon>
    </lineage>
</organism>